<proteinExistence type="inferred from homology"/>
<reference key="1">
    <citation type="journal article" date="2001" name="Lancet">
        <title>Whole genome sequencing of meticillin-resistant Staphylococcus aureus.</title>
        <authorList>
            <person name="Kuroda M."/>
            <person name="Ohta T."/>
            <person name="Uchiyama I."/>
            <person name="Baba T."/>
            <person name="Yuzawa H."/>
            <person name="Kobayashi I."/>
            <person name="Cui L."/>
            <person name="Oguchi A."/>
            <person name="Aoki K."/>
            <person name="Nagai Y."/>
            <person name="Lian J.-Q."/>
            <person name="Ito T."/>
            <person name="Kanamori M."/>
            <person name="Matsumaru H."/>
            <person name="Maruyama A."/>
            <person name="Murakami H."/>
            <person name="Hosoyama A."/>
            <person name="Mizutani-Ui Y."/>
            <person name="Takahashi N.K."/>
            <person name="Sawano T."/>
            <person name="Inoue R."/>
            <person name="Kaito C."/>
            <person name="Sekimizu K."/>
            <person name="Hirakawa H."/>
            <person name="Kuhara S."/>
            <person name="Goto S."/>
            <person name="Yabuzaki J."/>
            <person name="Kanehisa M."/>
            <person name="Yamashita A."/>
            <person name="Oshima K."/>
            <person name="Furuya K."/>
            <person name="Yoshino C."/>
            <person name="Shiba T."/>
            <person name="Hattori M."/>
            <person name="Ogasawara N."/>
            <person name="Hayashi H."/>
            <person name="Hiramatsu K."/>
        </authorList>
    </citation>
    <scope>NUCLEOTIDE SEQUENCE [LARGE SCALE GENOMIC DNA]</scope>
    <source>
        <strain>Mu50 / ATCC 700699</strain>
    </source>
</reference>
<keyword id="KW-0678">Repressor</keyword>
<keyword id="KW-0687">Ribonucleoprotein</keyword>
<keyword id="KW-0689">Ribosomal protein</keyword>
<keyword id="KW-0694">RNA-binding</keyword>
<keyword id="KW-0699">rRNA-binding</keyword>
<keyword id="KW-0810">Translation regulation</keyword>
<keyword id="KW-0820">tRNA-binding</keyword>
<sequence length="230" mass="24708">MAKKGKKYQEAASKVDRTQHYSVEEAIKLAKETSIANFDASVEVAFRLGIDTRKNDQQIRGAVVLPNGTGKSQSVLVFAKGDKIAEAEAAGADYVGEAEYVQKIQQGWFDFDVVVATPDMMGEVGKLGRVLGPKGLMPNPKTGTVTMDVKKAVEEIKAGKVEYRAEKAGIVHASIGKVSFTDEQLIENFNTLQDVLAKAKPSSAKGTYFKSVAVTTTMGPGVKIDTASFK</sequence>
<feature type="chain" id="PRO_0000125732" description="Large ribosomal subunit protein uL1">
    <location>
        <begin position="1"/>
        <end position="230"/>
    </location>
</feature>
<organism>
    <name type="scientific">Staphylococcus aureus (strain Mu50 / ATCC 700699)</name>
    <dbReference type="NCBI Taxonomy" id="158878"/>
    <lineage>
        <taxon>Bacteria</taxon>
        <taxon>Bacillati</taxon>
        <taxon>Bacillota</taxon>
        <taxon>Bacilli</taxon>
        <taxon>Bacillales</taxon>
        <taxon>Staphylococcaceae</taxon>
        <taxon>Staphylococcus</taxon>
    </lineage>
</organism>
<gene>
    <name evidence="1" type="primary">rplA</name>
    <name type="ordered locus">SAV0538</name>
</gene>
<protein>
    <recommendedName>
        <fullName evidence="1">Large ribosomal subunit protein uL1</fullName>
    </recommendedName>
    <alternativeName>
        <fullName evidence="2">50S ribosomal protein L1</fullName>
    </alternativeName>
</protein>
<comment type="function">
    <text evidence="1">Binds directly to 23S rRNA. The L1 stalk is quite mobile in the ribosome, and is involved in E site tRNA release.</text>
</comment>
<comment type="function">
    <text evidence="1">Protein L1 is also a translational repressor protein, it controls the translation of the L11 operon by binding to its mRNA.</text>
</comment>
<comment type="subunit">
    <text evidence="1">Part of the 50S ribosomal subunit.</text>
</comment>
<comment type="similarity">
    <text evidence="1">Belongs to the universal ribosomal protein uL1 family.</text>
</comment>
<accession>P66091</accession>
<accession>Q932F9</accession>
<dbReference type="EMBL" id="BA000017">
    <property type="protein sequence ID" value="BAB56700.1"/>
    <property type="molecule type" value="Genomic_DNA"/>
</dbReference>
<dbReference type="RefSeq" id="WP_001074619.1">
    <property type="nucleotide sequence ID" value="NC_002758.2"/>
</dbReference>
<dbReference type="SMR" id="P66091"/>
<dbReference type="GeneID" id="98344872"/>
<dbReference type="KEGG" id="sav:SAV0538"/>
<dbReference type="HOGENOM" id="CLU_062853_0_0_9"/>
<dbReference type="PhylomeDB" id="P66091"/>
<dbReference type="Proteomes" id="UP000002481">
    <property type="component" value="Chromosome"/>
</dbReference>
<dbReference type="GO" id="GO:0015934">
    <property type="term" value="C:large ribosomal subunit"/>
    <property type="evidence" value="ECO:0007669"/>
    <property type="project" value="InterPro"/>
</dbReference>
<dbReference type="GO" id="GO:0019843">
    <property type="term" value="F:rRNA binding"/>
    <property type="evidence" value="ECO:0007669"/>
    <property type="project" value="UniProtKB-UniRule"/>
</dbReference>
<dbReference type="GO" id="GO:0003735">
    <property type="term" value="F:structural constituent of ribosome"/>
    <property type="evidence" value="ECO:0007669"/>
    <property type="project" value="InterPro"/>
</dbReference>
<dbReference type="GO" id="GO:0000049">
    <property type="term" value="F:tRNA binding"/>
    <property type="evidence" value="ECO:0007669"/>
    <property type="project" value="UniProtKB-KW"/>
</dbReference>
<dbReference type="GO" id="GO:0006417">
    <property type="term" value="P:regulation of translation"/>
    <property type="evidence" value="ECO:0007669"/>
    <property type="project" value="UniProtKB-KW"/>
</dbReference>
<dbReference type="GO" id="GO:0006412">
    <property type="term" value="P:translation"/>
    <property type="evidence" value="ECO:0007669"/>
    <property type="project" value="UniProtKB-UniRule"/>
</dbReference>
<dbReference type="CDD" id="cd00403">
    <property type="entry name" value="Ribosomal_L1"/>
    <property type="match status" value="1"/>
</dbReference>
<dbReference type="FunFam" id="3.40.50.790:FF:000001">
    <property type="entry name" value="50S ribosomal protein L1"/>
    <property type="match status" value="1"/>
</dbReference>
<dbReference type="Gene3D" id="3.30.190.20">
    <property type="match status" value="1"/>
</dbReference>
<dbReference type="Gene3D" id="3.40.50.790">
    <property type="match status" value="1"/>
</dbReference>
<dbReference type="HAMAP" id="MF_01318_B">
    <property type="entry name" value="Ribosomal_uL1_B"/>
    <property type="match status" value="1"/>
</dbReference>
<dbReference type="InterPro" id="IPR005878">
    <property type="entry name" value="Ribosom_uL1_bac-type"/>
</dbReference>
<dbReference type="InterPro" id="IPR002143">
    <property type="entry name" value="Ribosomal_uL1"/>
</dbReference>
<dbReference type="InterPro" id="IPR023674">
    <property type="entry name" value="Ribosomal_uL1-like"/>
</dbReference>
<dbReference type="InterPro" id="IPR028364">
    <property type="entry name" value="Ribosomal_uL1/biogenesis"/>
</dbReference>
<dbReference type="InterPro" id="IPR016095">
    <property type="entry name" value="Ribosomal_uL1_3-a/b-sand"/>
</dbReference>
<dbReference type="InterPro" id="IPR023673">
    <property type="entry name" value="Ribosomal_uL1_CS"/>
</dbReference>
<dbReference type="NCBIfam" id="TIGR01169">
    <property type="entry name" value="rplA_bact"/>
    <property type="match status" value="1"/>
</dbReference>
<dbReference type="PANTHER" id="PTHR36427">
    <property type="entry name" value="54S RIBOSOMAL PROTEIN L1, MITOCHONDRIAL"/>
    <property type="match status" value="1"/>
</dbReference>
<dbReference type="PANTHER" id="PTHR36427:SF3">
    <property type="entry name" value="LARGE RIBOSOMAL SUBUNIT PROTEIN UL1M"/>
    <property type="match status" value="1"/>
</dbReference>
<dbReference type="Pfam" id="PF00687">
    <property type="entry name" value="Ribosomal_L1"/>
    <property type="match status" value="1"/>
</dbReference>
<dbReference type="PIRSF" id="PIRSF002155">
    <property type="entry name" value="Ribosomal_L1"/>
    <property type="match status" value="1"/>
</dbReference>
<dbReference type="SUPFAM" id="SSF56808">
    <property type="entry name" value="Ribosomal protein L1"/>
    <property type="match status" value="1"/>
</dbReference>
<dbReference type="PROSITE" id="PS01199">
    <property type="entry name" value="RIBOSOMAL_L1"/>
    <property type="match status" value="1"/>
</dbReference>
<name>RL1_STAAM</name>
<evidence type="ECO:0000255" key="1">
    <source>
        <dbReference type="HAMAP-Rule" id="MF_01318"/>
    </source>
</evidence>
<evidence type="ECO:0000305" key="2"/>